<organism>
    <name type="scientific">Caenorhabditis elegans</name>
    <dbReference type="NCBI Taxonomy" id="6239"/>
    <lineage>
        <taxon>Eukaryota</taxon>
        <taxon>Metazoa</taxon>
        <taxon>Ecdysozoa</taxon>
        <taxon>Nematoda</taxon>
        <taxon>Chromadorea</taxon>
        <taxon>Rhabditida</taxon>
        <taxon>Rhabditina</taxon>
        <taxon>Rhabditomorpha</taxon>
        <taxon>Rhabditoidea</taxon>
        <taxon>Rhabditidae</taxon>
        <taxon>Peloderinae</taxon>
        <taxon>Caenorhabditis</taxon>
    </lineage>
</organism>
<name>YNC5_CAEEL</name>
<proteinExistence type="predicted"/>
<accession>P34538</accession>
<dbReference type="EMBL" id="FO081667">
    <property type="protein sequence ID" value="CCD73197.1"/>
    <property type="molecule type" value="Genomic_DNA"/>
</dbReference>
<dbReference type="RefSeq" id="NP_498840.2">
    <property type="nucleotide sequence ID" value="NM_066439.2"/>
</dbReference>
<dbReference type="SMR" id="P34538"/>
<dbReference type="FunCoup" id="P34538">
    <property type="interactions" value="2"/>
</dbReference>
<dbReference type="STRING" id="6239.R05D3.5.1"/>
<dbReference type="PaxDb" id="6239-R05D3.5"/>
<dbReference type="UCSC" id="R05D3.5">
    <property type="organism name" value="c. elegans"/>
</dbReference>
<dbReference type="WormBase" id="R05D3.5">
    <property type="protein sequence ID" value="CE45806"/>
    <property type="gene ID" value="WBGene00019879"/>
</dbReference>
<dbReference type="eggNOG" id="KOG0439">
    <property type="taxonomic scope" value="Eukaryota"/>
</dbReference>
<dbReference type="HOGENOM" id="CLU_092913_2_1_1"/>
<dbReference type="InParanoid" id="P34538"/>
<dbReference type="OMA" id="LWANAKI"/>
<dbReference type="PhylomeDB" id="P34538"/>
<dbReference type="PRO" id="PR:P34538"/>
<dbReference type="Proteomes" id="UP000001940">
    <property type="component" value="Chromosome III"/>
</dbReference>
<dbReference type="Bgee" id="WBGene00019879">
    <property type="expression patterns" value="Expressed in larva and 1 other cell type or tissue"/>
</dbReference>
<dbReference type="Gene3D" id="2.60.40.10">
    <property type="entry name" value="Immunoglobulins"/>
    <property type="match status" value="1"/>
</dbReference>
<dbReference type="InterPro" id="IPR013783">
    <property type="entry name" value="Ig-like_fold"/>
</dbReference>
<dbReference type="InterPro" id="IPR000535">
    <property type="entry name" value="MSP_dom"/>
</dbReference>
<dbReference type="InterPro" id="IPR008962">
    <property type="entry name" value="PapD-like_sf"/>
</dbReference>
<dbReference type="PANTHER" id="PTHR21513">
    <property type="entry name" value="MAJOR SPERM PROTEIN"/>
    <property type="match status" value="1"/>
</dbReference>
<dbReference type="PANTHER" id="PTHR21513:SF2">
    <property type="entry name" value="MAJOR SPERM PROTEIN"/>
    <property type="match status" value="1"/>
</dbReference>
<dbReference type="Pfam" id="PF00635">
    <property type="entry name" value="Motile_Sperm"/>
    <property type="match status" value="1"/>
</dbReference>
<dbReference type="SUPFAM" id="SSF49354">
    <property type="entry name" value="PapD-like"/>
    <property type="match status" value="1"/>
</dbReference>
<dbReference type="PROSITE" id="PS50202">
    <property type="entry name" value="MSP"/>
    <property type="match status" value="1"/>
</dbReference>
<feature type="chain" id="PRO_0000213477" description="Uncharacterized protein R05D3.5">
    <location>
        <begin position="1"/>
        <end position="178"/>
    </location>
</feature>
<feature type="domain" description="MSP" evidence="1">
    <location>
        <begin position="52"/>
        <end position="177"/>
    </location>
</feature>
<evidence type="ECO:0000255" key="1">
    <source>
        <dbReference type="PROSITE-ProRule" id="PRU00132"/>
    </source>
</evidence>
<reference key="1">
    <citation type="journal article" date="1994" name="Nature">
        <title>2.2 Mb of contiguous nucleotide sequence from chromosome III of C. elegans.</title>
        <authorList>
            <person name="Wilson R."/>
            <person name="Ainscough R."/>
            <person name="Anderson K."/>
            <person name="Baynes C."/>
            <person name="Berks M."/>
            <person name="Bonfield J."/>
            <person name="Burton J."/>
            <person name="Connell M."/>
            <person name="Copsey T."/>
            <person name="Cooper J."/>
            <person name="Coulson A."/>
            <person name="Craxton M."/>
            <person name="Dear S."/>
            <person name="Du Z."/>
            <person name="Durbin R."/>
            <person name="Favello A."/>
            <person name="Fraser A."/>
            <person name="Fulton L."/>
            <person name="Gardner A."/>
            <person name="Green P."/>
            <person name="Hawkins T."/>
            <person name="Hillier L."/>
            <person name="Jier M."/>
            <person name="Johnston L."/>
            <person name="Jones M."/>
            <person name="Kershaw J."/>
            <person name="Kirsten J."/>
            <person name="Laisster N."/>
            <person name="Latreille P."/>
            <person name="Lightning J."/>
            <person name="Lloyd C."/>
            <person name="Mortimore B."/>
            <person name="O'Callaghan M."/>
            <person name="Parsons J."/>
            <person name="Percy C."/>
            <person name="Rifken L."/>
            <person name="Roopra A."/>
            <person name="Saunders D."/>
            <person name="Shownkeen R."/>
            <person name="Sims M."/>
            <person name="Smaldon N."/>
            <person name="Smith A."/>
            <person name="Smith M."/>
            <person name="Sonnhammer E."/>
            <person name="Staden R."/>
            <person name="Sulston J."/>
            <person name="Thierry-Mieg J."/>
            <person name="Thomas K."/>
            <person name="Vaudin M."/>
            <person name="Vaughan K."/>
            <person name="Waterston R."/>
            <person name="Watson A."/>
            <person name="Weinstock L."/>
            <person name="Wilkinson-Sproat J."/>
            <person name="Wohldman P."/>
        </authorList>
    </citation>
    <scope>NUCLEOTIDE SEQUENCE [LARGE SCALE GENOMIC DNA]</scope>
    <source>
        <strain>Bristol N2</strain>
    </source>
</reference>
<reference key="2">
    <citation type="journal article" date="1998" name="Science">
        <title>Genome sequence of the nematode C. elegans: a platform for investigating biology.</title>
        <authorList>
            <consortium name="The C. elegans sequencing consortium"/>
        </authorList>
    </citation>
    <scope>NUCLEOTIDE SEQUENCE [LARGE SCALE GENOMIC DNA]</scope>
    <source>
        <strain>Bristol N2</strain>
    </source>
</reference>
<gene>
    <name type="ORF">R05D3.5</name>
</gene>
<sequence length="178" mass="20009">MGDKKSPVAVGMTVLPPNQENFVDAGSTTLMNKPGEPIFKLAINLTNKNHSHIAIEDRAHQSSRLQVQKVEFKCTEDRKPISVNLKLHNPTAVTVSYKVRCTSADIFRVQPPLGFVKPSETVSIVIWYQNQDKKDAISKNHYFAFYHTNSDGRTARELWANSKVEGVRRLPASFLSTK</sequence>
<keyword id="KW-1185">Reference proteome</keyword>
<protein>
    <recommendedName>
        <fullName>Uncharacterized protein R05D3.5</fullName>
    </recommendedName>
</protein>